<accession>Q21Y67</accession>
<organism>
    <name type="scientific">Albidiferax ferrireducens (strain ATCC BAA-621 / DSM 15236 / T118)</name>
    <name type="common">Rhodoferax ferrireducens</name>
    <dbReference type="NCBI Taxonomy" id="338969"/>
    <lineage>
        <taxon>Bacteria</taxon>
        <taxon>Pseudomonadati</taxon>
        <taxon>Pseudomonadota</taxon>
        <taxon>Betaproteobacteria</taxon>
        <taxon>Burkholderiales</taxon>
        <taxon>Comamonadaceae</taxon>
        <taxon>Rhodoferax</taxon>
    </lineage>
</organism>
<comment type="function">
    <text evidence="1">Cleaves peptides in various proteins in a process that requires ATP hydrolysis. Has a chymotrypsin-like activity. Plays a major role in the degradation of misfolded proteins.</text>
</comment>
<comment type="catalytic activity">
    <reaction evidence="1">
        <text>Hydrolysis of proteins to small peptides in the presence of ATP and magnesium. alpha-casein is the usual test substrate. In the absence of ATP, only oligopeptides shorter than five residues are hydrolyzed (such as succinyl-Leu-Tyr-|-NHMec, and Leu-Tyr-Leu-|-Tyr-Trp, in which cleavage of the -Tyr-|-Leu- and -Tyr-|-Trp bonds also occurs).</text>
        <dbReference type="EC" id="3.4.21.92"/>
    </reaction>
</comment>
<comment type="subunit">
    <text evidence="1">Fourteen ClpP subunits assemble into 2 heptameric rings which stack back to back to give a disk-like structure with a central cavity, resembling the structure of eukaryotic proteasomes.</text>
</comment>
<comment type="subcellular location">
    <subcellularLocation>
        <location evidence="1">Cytoplasm</location>
    </subcellularLocation>
</comment>
<comment type="similarity">
    <text evidence="1">Belongs to the peptidase S14 family.</text>
</comment>
<comment type="sequence caution" evidence="2">
    <conflict type="erroneous initiation">
        <sequence resource="EMBL-CDS" id="ABD69286"/>
    </conflict>
</comment>
<reference key="1">
    <citation type="submission" date="2006-02" db="EMBL/GenBank/DDBJ databases">
        <title>Complete sequence of chromosome of Rhodoferax ferrireducens DSM 15236.</title>
        <authorList>
            <person name="Copeland A."/>
            <person name="Lucas S."/>
            <person name="Lapidus A."/>
            <person name="Barry K."/>
            <person name="Detter J.C."/>
            <person name="Glavina del Rio T."/>
            <person name="Hammon N."/>
            <person name="Israni S."/>
            <person name="Pitluck S."/>
            <person name="Brettin T."/>
            <person name="Bruce D."/>
            <person name="Han C."/>
            <person name="Tapia R."/>
            <person name="Gilna P."/>
            <person name="Kiss H."/>
            <person name="Schmutz J."/>
            <person name="Larimer F."/>
            <person name="Land M."/>
            <person name="Kyrpides N."/>
            <person name="Ivanova N."/>
            <person name="Richardson P."/>
        </authorList>
    </citation>
    <scope>NUCLEOTIDE SEQUENCE [LARGE SCALE GENOMIC DNA]</scope>
    <source>
        <strain>ATCC BAA-621 / DSM 15236 / T118</strain>
    </source>
</reference>
<gene>
    <name evidence="1" type="primary">clpP</name>
    <name type="ordered locus">Rfer_1554</name>
</gene>
<keyword id="KW-0963">Cytoplasm</keyword>
<keyword id="KW-0378">Hydrolase</keyword>
<keyword id="KW-0645">Protease</keyword>
<keyword id="KW-1185">Reference proteome</keyword>
<keyword id="KW-0720">Serine protease</keyword>
<evidence type="ECO:0000255" key="1">
    <source>
        <dbReference type="HAMAP-Rule" id="MF_00444"/>
    </source>
</evidence>
<evidence type="ECO:0000305" key="2"/>
<name>CLPP_ALBFT</name>
<protein>
    <recommendedName>
        <fullName evidence="1">ATP-dependent Clp protease proteolytic subunit</fullName>
        <ecNumber evidence="1">3.4.21.92</ecNumber>
    </recommendedName>
    <alternativeName>
        <fullName evidence="1">Endopeptidase Clp</fullName>
    </alternativeName>
</protein>
<feature type="chain" id="PRO_0000252842" description="ATP-dependent Clp protease proteolytic subunit">
    <location>
        <begin position="1"/>
        <end position="202"/>
    </location>
</feature>
<feature type="active site" description="Nucleophile" evidence="1">
    <location>
        <position position="106"/>
    </location>
</feature>
<feature type="active site" evidence="1">
    <location>
        <position position="131"/>
    </location>
</feature>
<proteinExistence type="inferred from homology"/>
<dbReference type="EC" id="3.4.21.92" evidence="1"/>
<dbReference type="EMBL" id="CP000267">
    <property type="protein sequence ID" value="ABD69286.1"/>
    <property type="status" value="ALT_INIT"/>
    <property type="molecule type" value="Genomic_DNA"/>
</dbReference>
<dbReference type="RefSeq" id="WP_041791699.1">
    <property type="nucleotide sequence ID" value="NC_007908.1"/>
</dbReference>
<dbReference type="SMR" id="Q21Y67"/>
<dbReference type="STRING" id="338969.Rfer_1554"/>
<dbReference type="MEROPS" id="S14.001"/>
<dbReference type="KEGG" id="rfr:Rfer_1554"/>
<dbReference type="eggNOG" id="COG0740">
    <property type="taxonomic scope" value="Bacteria"/>
</dbReference>
<dbReference type="HOGENOM" id="CLU_058707_3_2_4"/>
<dbReference type="OrthoDB" id="9802800at2"/>
<dbReference type="Proteomes" id="UP000008332">
    <property type="component" value="Chromosome"/>
</dbReference>
<dbReference type="GO" id="GO:0005737">
    <property type="term" value="C:cytoplasm"/>
    <property type="evidence" value="ECO:0007669"/>
    <property type="project" value="UniProtKB-SubCell"/>
</dbReference>
<dbReference type="GO" id="GO:0009368">
    <property type="term" value="C:endopeptidase Clp complex"/>
    <property type="evidence" value="ECO:0007669"/>
    <property type="project" value="TreeGrafter"/>
</dbReference>
<dbReference type="GO" id="GO:0004176">
    <property type="term" value="F:ATP-dependent peptidase activity"/>
    <property type="evidence" value="ECO:0007669"/>
    <property type="project" value="InterPro"/>
</dbReference>
<dbReference type="GO" id="GO:0051117">
    <property type="term" value="F:ATPase binding"/>
    <property type="evidence" value="ECO:0007669"/>
    <property type="project" value="TreeGrafter"/>
</dbReference>
<dbReference type="GO" id="GO:0004252">
    <property type="term" value="F:serine-type endopeptidase activity"/>
    <property type="evidence" value="ECO:0007669"/>
    <property type="project" value="UniProtKB-UniRule"/>
</dbReference>
<dbReference type="GO" id="GO:0006515">
    <property type="term" value="P:protein quality control for misfolded or incompletely synthesized proteins"/>
    <property type="evidence" value="ECO:0007669"/>
    <property type="project" value="TreeGrafter"/>
</dbReference>
<dbReference type="CDD" id="cd07017">
    <property type="entry name" value="S14_ClpP_2"/>
    <property type="match status" value="1"/>
</dbReference>
<dbReference type="FunFam" id="3.90.226.10:FF:000001">
    <property type="entry name" value="ATP-dependent Clp protease proteolytic subunit"/>
    <property type="match status" value="1"/>
</dbReference>
<dbReference type="Gene3D" id="3.90.226.10">
    <property type="entry name" value="2-enoyl-CoA Hydratase, Chain A, domain 1"/>
    <property type="match status" value="1"/>
</dbReference>
<dbReference type="HAMAP" id="MF_00444">
    <property type="entry name" value="ClpP"/>
    <property type="match status" value="1"/>
</dbReference>
<dbReference type="InterPro" id="IPR001907">
    <property type="entry name" value="ClpP"/>
</dbReference>
<dbReference type="InterPro" id="IPR029045">
    <property type="entry name" value="ClpP/crotonase-like_dom_sf"/>
</dbReference>
<dbReference type="InterPro" id="IPR023562">
    <property type="entry name" value="ClpP/TepA"/>
</dbReference>
<dbReference type="InterPro" id="IPR033135">
    <property type="entry name" value="ClpP_His_AS"/>
</dbReference>
<dbReference type="NCBIfam" id="TIGR00493">
    <property type="entry name" value="clpP"/>
    <property type="match status" value="1"/>
</dbReference>
<dbReference type="NCBIfam" id="NF001368">
    <property type="entry name" value="PRK00277.1"/>
    <property type="match status" value="1"/>
</dbReference>
<dbReference type="NCBIfam" id="NF009205">
    <property type="entry name" value="PRK12553.1"/>
    <property type="match status" value="1"/>
</dbReference>
<dbReference type="PANTHER" id="PTHR10381">
    <property type="entry name" value="ATP-DEPENDENT CLP PROTEASE PROTEOLYTIC SUBUNIT"/>
    <property type="match status" value="1"/>
</dbReference>
<dbReference type="PANTHER" id="PTHR10381:SF70">
    <property type="entry name" value="ATP-DEPENDENT CLP PROTEASE PROTEOLYTIC SUBUNIT"/>
    <property type="match status" value="1"/>
</dbReference>
<dbReference type="Pfam" id="PF00574">
    <property type="entry name" value="CLP_protease"/>
    <property type="match status" value="1"/>
</dbReference>
<dbReference type="PRINTS" id="PR00127">
    <property type="entry name" value="CLPPROTEASEP"/>
</dbReference>
<dbReference type="SUPFAM" id="SSF52096">
    <property type="entry name" value="ClpP/crotonase"/>
    <property type="match status" value="1"/>
</dbReference>
<dbReference type="PROSITE" id="PS00382">
    <property type="entry name" value="CLP_PROTEASE_HIS"/>
    <property type="match status" value="1"/>
</dbReference>
<sequence>MGAMQTQALGMVPMVIEQSGRGERSYDIYSRLLKERVIFLVGPVNDYVANLVVAQLLFLESDNPDKDISFYINSPGGSVSAGMAIFDTMNFVKPDVSTLCTGMAASMGAFLLAAGAKGKRFSLPNSKVMIHQPSGGSQGQATEIEIQAREILKTREQLNKILAERTGQPLARIERDTERDYYMSADECKEYGLIDQVISKRA</sequence>